<organism>
    <name type="scientific">Bacillus subtilis (strain 168)</name>
    <dbReference type="NCBI Taxonomy" id="224308"/>
    <lineage>
        <taxon>Bacteria</taxon>
        <taxon>Bacillati</taxon>
        <taxon>Bacillota</taxon>
        <taxon>Bacilli</taxon>
        <taxon>Bacillales</taxon>
        <taxon>Bacillaceae</taxon>
        <taxon>Bacillus</taxon>
    </lineage>
</organism>
<keyword id="KW-1003">Cell membrane</keyword>
<keyword id="KW-0472">Membrane</keyword>
<keyword id="KW-1185">Reference proteome</keyword>
<keyword id="KW-0812">Transmembrane</keyword>
<keyword id="KW-1133">Transmembrane helix</keyword>
<proteinExistence type="inferred from homology"/>
<feature type="chain" id="PRO_0000381930" description="UPF0702 transmembrane protein YdfS">
    <location>
        <begin position="1"/>
        <end position="235"/>
    </location>
</feature>
<feature type="transmembrane region" description="Helical" evidence="1">
    <location>
        <begin position="32"/>
        <end position="52"/>
    </location>
</feature>
<feature type="transmembrane region" description="Helical" evidence="1">
    <location>
        <begin position="60"/>
        <end position="80"/>
    </location>
</feature>
<gene>
    <name type="primary">ydfS</name>
    <name type="ordered locus">BSU05540</name>
</gene>
<evidence type="ECO:0000255" key="1"/>
<evidence type="ECO:0000305" key="2"/>
<dbReference type="EMBL" id="AB001488">
    <property type="protein sequence ID" value="BAA19387.1"/>
    <property type="molecule type" value="Genomic_DNA"/>
</dbReference>
<dbReference type="EMBL" id="AL009126">
    <property type="protein sequence ID" value="CAB12361.1"/>
    <property type="molecule type" value="Genomic_DNA"/>
</dbReference>
<dbReference type="PIR" id="A69782">
    <property type="entry name" value="A69782"/>
</dbReference>
<dbReference type="RefSeq" id="NP_388435.1">
    <property type="nucleotide sequence ID" value="NC_000964.3"/>
</dbReference>
<dbReference type="RefSeq" id="WP_003234156.1">
    <property type="nucleotide sequence ID" value="NZ_OZ025638.1"/>
</dbReference>
<dbReference type="SMR" id="P96697"/>
<dbReference type="FunCoup" id="P96697">
    <property type="interactions" value="107"/>
</dbReference>
<dbReference type="STRING" id="224308.BSU05540"/>
<dbReference type="PaxDb" id="224308-BSU05540"/>
<dbReference type="DNASU" id="939890"/>
<dbReference type="EnsemblBacteria" id="CAB12361">
    <property type="protein sequence ID" value="CAB12361"/>
    <property type="gene ID" value="BSU_05540"/>
</dbReference>
<dbReference type="GeneID" id="939890"/>
<dbReference type="KEGG" id="bsu:BSU05540"/>
<dbReference type="PATRIC" id="fig|224308.179.peg.596"/>
<dbReference type="eggNOG" id="COG2323">
    <property type="taxonomic scope" value="Bacteria"/>
</dbReference>
<dbReference type="InParanoid" id="P96697"/>
<dbReference type="OrthoDB" id="9778331at2"/>
<dbReference type="PhylomeDB" id="P96697"/>
<dbReference type="BioCyc" id="BSUB:BSU05540-MONOMER"/>
<dbReference type="Proteomes" id="UP000001570">
    <property type="component" value="Chromosome"/>
</dbReference>
<dbReference type="GO" id="GO:0005886">
    <property type="term" value="C:plasma membrane"/>
    <property type="evidence" value="ECO:0007669"/>
    <property type="project" value="UniProtKB-SubCell"/>
</dbReference>
<dbReference type="Gene3D" id="3.30.240.20">
    <property type="entry name" value="bsu07140 like domains"/>
    <property type="match status" value="2"/>
</dbReference>
<dbReference type="InterPro" id="IPR007353">
    <property type="entry name" value="DUF421"/>
</dbReference>
<dbReference type="InterPro" id="IPR023090">
    <property type="entry name" value="UPF0702_alpha/beta_dom_sf"/>
</dbReference>
<dbReference type="InterPro" id="IPR048454">
    <property type="entry name" value="YetF_N"/>
</dbReference>
<dbReference type="PANTHER" id="PTHR34582">
    <property type="entry name" value="UPF0702 TRANSMEMBRANE PROTEIN YCAP"/>
    <property type="match status" value="1"/>
</dbReference>
<dbReference type="PANTHER" id="PTHR34582:SF7">
    <property type="entry name" value="UPF0702 TRANSMEMBRANE PROTEIN YDFS"/>
    <property type="match status" value="1"/>
</dbReference>
<dbReference type="Pfam" id="PF04239">
    <property type="entry name" value="DUF421"/>
    <property type="match status" value="1"/>
</dbReference>
<dbReference type="Pfam" id="PF20730">
    <property type="entry name" value="YetF_N"/>
    <property type="match status" value="1"/>
</dbReference>
<sequence>MIELEVVIRTVASFGLLLIAERILGKQTISQMTIFDFIAAITLGAIAAGLAYNTSIKPHNMAISFSIFVLTIFLISFLSIKNRKLRKFFAGDPTVLIQNGKILESNMRKMRYTLDYLNQQLREKEIFNIEEVLFAILETNGQLTVLRKPQFRHVTKQDLMIAVNQEQRLPIELIMDGEIIENNLKQNRLTESWLLEELRKRDIKVKETVYAVLLGNGDIYVDQYKDHISVPMDKE</sequence>
<comment type="subcellular location">
    <subcellularLocation>
        <location evidence="2">Cell membrane</location>
        <topology evidence="2">Multi-pass membrane protein</topology>
    </subcellularLocation>
</comment>
<comment type="similarity">
    <text evidence="2">Belongs to the UPF0702 family.</text>
</comment>
<protein>
    <recommendedName>
        <fullName>UPF0702 transmembrane protein YdfS</fullName>
    </recommendedName>
</protein>
<name>YDFS_BACSU</name>
<accession>P96697</accession>
<accession>Q797F5</accession>
<reference key="1">
    <citation type="submission" date="1997-03" db="EMBL/GenBank/DDBJ databases">
        <title>A 148 kbp sequence of the region between 35 and 47 degree of the Bacillus subtilis genome.</title>
        <authorList>
            <person name="Kasahara Y."/>
            <person name="Nakai S."/>
            <person name="Lee S."/>
            <person name="Sadaie Y."/>
            <person name="Ogasawara N."/>
        </authorList>
    </citation>
    <scope>NUCLEOTIDE SEQUENCE [GENOMIC DNA]</scope>
    <source>
        <strain>168</strain>
    </source>
</reference>
<reference key="2">
    <citation type="journal article" date="1997" name="Nature">
        <title>The complete genome sequence of the Gram-positive bacterium Bacillus subtilis.</title>
        <authorList>
            <person name="Kunst F."/>
            <person name="Ogasawara N."/>
            <person name="Moszer I."/>
            <person name="Albertini A.M."/>
            <person name="Alloni G."/>
            <person name="Azevedo V."/>
            <person name="Bertero M.G."/>
            <person name="Bessieres P."/>
            <person name="Bolotin A."/>
            <person name="Borchert S."/>
            <person name="Borriss R."/>
            <person name="Boursier L."/>
            <person name="Brans A."/>
            <person name="Braun M."/>
            <person name="Brignell S.C."/>
            <person name="Bron S."/>
            <person name="Brouillet S."/>
            <person name="Bruschi C.V."/>
            <person name="Caldwell B."/>
            <person name="Capuano V."/>
            <person name="Carter N.M."/>
            <person name="Choi S.-K."/>
            <person name="Codani J.-J."/>
            <person name="Connerton I.F."/>
            <person name="Cummings N.J."/>
            <person name="Daniel R.A."/>
            <person name="Denizot F."/>
            <person name="Devine K.M."/>
            <person name="Duesterhoeft A."/>
            <person name="Ehrlich S.D."/>
            <person name="Emmerson P.T."/>
            <person name="Entian K.-D."/>
            <person name="Errington J."/>
            <person name="Fabret C."/>
            <person name="Ferrari E."/>
            <person name="Foulger D."/>
            <person name="Fritz C."/>
            <person name="Fujita M."/>
            <person name="Fujita Y."/>
            <person name="Fuma S."/>
            <person name="Galizzi A."/>
            <person name="Galleron N."/>
            <person name="Ghim S.-Y."/>
            <person name="Glaser P."/>
            <person name="Goffeau A."/>
            <person name="Golightly E.J."/>
            <person name="Grandi G."/>
            <person name="Guiseppi G."/>
            <person name="Guy B.J."/>
            <person name="Haga K."/>
            <person name="Haiech J."/>
            <person name="Harwood C.R."/>
            <person name="Henaut A."/>
            <person name="Hilbert H."/>
            <person name="Holsappel S."/>
            <person name="Hosono S."/>
            <person name="Hullo M.-F."/>
            <person name="Itaya M."/>
            <person name="Jones L.-M."/>
            <person name="Joris B."/>
            <person name="Karamata D."/>
            <person name="Kasahara Y."/>
            <person name="Klaerr-Blanchard M."/>
            <person name="Klein C."/>
            <person name="Kobayashi Y."/>
            <person name="Koetter P."/>
            <person name="Koningstein G."/>
            <person name="Krogh S."/>
            <person name="Kumano M."/>
            <person name="Kurita K."/>
            <person name="Lapidus A."/>
            <person name="Lardinois S."/>
            <person name="Lauber J."/>
            <person name="Lazarevic V."/>
            <person name="Lee S.-M."/>
            <person name="Levine A."/>
            <person name="Liu H."/>
            <person name="Masuda S."/>
            <person name="Mauel C."/>
            <person name="Medigue C."/>
            <person name="Medina N."/>
            <person name="Mellado R.P."/>
            <person name="Mizuno M."/>
            <person name="Moestl D."/>
            <person name="Nakai S."/>
            <person name="Noback M."/>
            <person name="Noone D."/>
            <person name="O'Reilly M."/>
            <person name="Ogawa K."/>
            <person name="Ogiwara A."/>
            <person name="Oudega B."/>
            <person name="Park S.-H."/>
            <person name="Parro V."/>
            <person name="Pohl T.M."/>
            <person name="Portetelle D."/>
            <person name="Porwollik S."/>
            <person name="Prescott A.M."/>
            <person name="Presecan E."/>
            <person name="Pujic P."/>
            <person name="Purnelle B."/>
            <person name="Rapoport G."/>
            <person name="Rey M."/>
            <person name="Reynolds S."/>
            <person name="Rieger M."/>
            <person name="Rivolta C."/>
            <person name="Rocha E."/>
            <person name="Roche B."/>
            <person name="Rose M."/>
            <person name="Sadaie Y."/>
            <person name="Sato T."/>
            <person name="Scanlan E."/>
            <person name="Schleich S."/>
            <person name="Schroeter R."/>
            <person name="Scoffone F."/>
            <person name="Sekiguchi J."/>
            <person name="Sekowska A."/>
            <person name="Seror S.J."/>
            <person name="Serror P."/>
            <person name="Shin B.-S."/>
            <person name="Soldo B."/>
            <person name="Sorokin A."/>
            <person name="Tacconi E."/>
            <person name="Takagi T."/>
            <person name="Takahashi H."/>
            <person name="Takemaru K."/>
            <person name="Takeuchi M."/>
            <person name="Tamakoshi A."/>
            <person name="Tanaka T."/>
            <person name="Terpstra P."/>
            <person name="Tognoni A."/>
            <person name="Tosato V."/>
            <person name="Uchiyama S."/>
            <person name="Vandenbol M."/>
            <person name="Vannier F."/>
            <person name="Vassarotti A."/>
            <person name="Viari A."/>
            <person name="Wambutt R."/>
            <person name="Wedler E."/>
            <person name="Wedler H."/>
            <person name="Weitzenegger T."/>
            <person name="Winters P."/>
            <person name="Wipat A."/>
            <person name="Yamamoto H."/>
            <person name="Yamane K."/>
            <person name="Yasumoto K."/>
            <person name="Yata K."/>
            <person name="Yoshida K."/>
            <person name="Yoshikawa H.-F."/>
            <person name="Zumstein E."/>
            <person name="Yoshikawa H."/>
            <person name="Danchin A."/>
        </authorList>
    </citation>
    <scope>NUCLEOTIDE SEQUENCE [LARGE SCALE GENOMIC DNA]</scope>
    <source>
        <strain>168</strain>
    </source>
</reference>